<sequence length="345" mass="39307">MKAIPTFTISVRQIESLSQIEEKLNNLSLTAKNNIDNASTHEELDKLRVSLLGKKGDLSIILKIMGQLSAAERPIVGQKANFIKINLQDLLNKRKNQLNNEALDQQIKNEKIDVTIPSIGTPPGSKHPLISTQDEIIDIFCGLGYTVESGPEIESDFYNFESLNIPKNHPARDMQDTFYLDENRLLRTHTSPVQIRYLEKNPPPVRIIAPGRVYRRDAVDATHSPVFNQVEVLCIDQDINFSHLRGTVLTFLKTFFGDIPVRFRASYFPFTEPSAEVDVQWKGKWLEVMGCGMVDPKVLEKLGIDSEKWTGFAAGLGVERFCMVRHQIDDIRKFYTNDLRFLEQF</sequence>
<comment type="catalytic activity">
    <reaction evidence="1">
        <text>tRNA(Phe) + L-phenylalanine + ATP = L-phenylalanyl-tRNA(Phe) + AMP + diphosphate + H(+)</text>
        <dbReference type="Rhea" id="RHEA:19413"/>
        <dbReference type="Rhea" id="RHEA-COMP:9668"/>
        <dbReference type="Rhea" id="RHEA-COMP:9699"/>
        <dbReference type="ChEBI" id="CHEBI:15378"/>
        <dbReference type="ChEBI" id="CHEBI:30616"/>
        <dbReference type="ChEBI" id="CHEBI:33019"/>
        <dbReference type="ChEBI" id="CHEBI:58095"/>
        <dbReference type="ChEBI" id="CHEBI:78442"/>
        <dbReference type="ChEBI" id="CHEBI:78531"/>
        <dbReference type="ChEBI" id="CHEBI:456215"/>
        <dbReference type="EC" id="6.1.1.20"/>
    </reaction>
</comment>
<comment type="cofactor">
    <cofactor evidence="1">
        <name>Mg(2+)</name>
        <dbReference type="ChEBI" id="CHEBI:18420"/>
    </cofactor>
    <text evidence="1">Binds 2 magnesium ions per tetramer.</text>
</comment>
<comment type="subunit">
    <text evidence="1">Tetramer of two alpha and two beta subunits.</text>
</comment>
<comment type="subcellular location">
    <subcellularLocation>
        <location evidence="1">Cytoplasm</location>
    </subcellularLocation>
</comment>
<comment type="similarity">
    <text evidence="1">Belongs to the class-II aminoacyl-tRNA synthetase family. Phe-tRNA synthetase alpha subunit type 1 subfamily.</text>
</comment>
<proteinExistence type="inferred from homology"/>
<accession>Q319M1</accession>
<gene>
    <name evidence="1" type="primary">pheS</name>
    <name type="ordered locus">PMT9312_1364</name>
</gene>
<dbReference type="EC" id="6.1.1.20" evidence="1"/>
<dbReference type="EMBL" id="CP000111">
    <property type="protein sequence ID" value="ABB50424.1"/>
    <property type="molecule type" value="Genomic_DNA"/>
</dbReference>
<dbReference type="SMR" id="Q319M1"/>
<dbReference type="STRING" id="74546.PMT9312_1364"/>
<dbReference type="KEGG" id="pmi:PMT9312_1364"/>
<dbReference type="eggNOG" id="COG0016">
    <property type="taxonomic scope" value="Bacteria"/>
</dbReference>
<dbReference type="HOGENOM" id="CLU_025086_0_1_3"/>
<dbReference type="Proteomes" id="UP000002715">
    <property type="component" value="Chromosome"/>
</dbReference>
<dbReference type="GO" id="GO:0005737">
    <property type="term" value="C:cytoplasm"/>
    <property type="evidence" value="ECO:0007669"/>
    <property type="project" value="UniProtKB-SubCell"/>
</dbReference>
<dbReference type="GO" id="GO:0005524">
    <property type="term" value="F:ATP binding"/>
    <property type="evidence" value="ECO:0007669"/>
    <property type="project" value="UniProtKB-UniRule"/>
</dbReference>
<dbReference type="GO" id="GO:0000287">
    <property type="term" value="F:magnesium ion binding"/>
    <property type="evidence" value="ECO:0007669"/>
    <property type="project" value="UniProtKB-UniRule"/>
</dbReference>
<dbReference type="GO" id="GO:0004826">
    <property type="term" value="F:phenylalanine-tRNA ligase activity"/>
    <property type="evidence" value="ECO:0007669"/>
    <property type="project" value="UniProtKB-UniRule"/>
</dbReference>
<dbReference type="GO" id="GO:0000049">
    <property type="term" value="F:tRNA binding"/>
    <property type="evidence" value="ECO:0007669"/>
    <property type="project" value="InterPro"/>
</dbReference>
<dbReference type="GO" id="GO:0006432">
    <property type="term" value="P:phenylalanyl-tRNA aminoacylation"/>
    <property type="evidence" value="ECO:0007669"/>
    <property type="project" value="UniProtKB-UniRule"/>
</dbReference>
<dbReference type="CDD" id="cd00496">
    <property type="entry name" value="PheRS_alpha_core"/>
    <property type="match status" value="1"/>
</dbReference>
<dbReference type="FunFam" id="3.30.930.10:FF:000003">
    <property type="entry name" value="Phenylalanine--tRNA ligase alpha subunit"/>
    <property type="match status" value="1"/>
</dbReference>
<dbReference type="Gene3D" id="3.30.930.10">
    <property type="entry name" value="Bira Bifunctional Protein, Domain 2"/>
    <property type="match status" value="1"/>
</dbReference>
<dbReference type="HAMAP" id="MF_00281">
    <property type="entry name" value="Phe_tRNA_synth_alpha1"/>
    <property type="match status" value="1"/>
</dbReference>
<dbReference type="InterPro" id="IPR006195">
    <property type="entry name" value="aa-tRNA-synth_II"/>
</dbReference>
<dbReference type="InterPro" id="IPR045864">
    <property type="entry name" value="aa-tRNA-synth_II/BPL/LPL"/>
</dbReference>
<dbReference type="InterPro" id="IPR004529">
    <property type="entry name" value="Phe-tRNA-synth_IIc_asu"/>
</dbReference>
<dbReference type="InterPro" id="IPR004188">
    <property type="entry name" value="Phe-tRNA_ligase_II_N"/>
</dbReference>
<dbReference type="InterPro" id="IPR022911">
    <property type="entry name" value="Phe_tRNA_ligase_alpha1_bac"/>
</dbReference>
<dbReference type="InterPro" id="IPR002319">
    <property type="entry name" value="Phenylalanyl-tRNA_Synthase"/>
</dbReference>
<dbReference type="InterPro" id="IPR010978">
    <property type="entry name" value="tRNA-bd_arm"/>
</dbReference>
<dbReference type="NCBIfam" id="TIGR00468">
    <property type="entry name" value="pheS"/>
    <property type="match status" value="1"/>
</dbReference>
<dbReference type="PANTHER" id="PTHR11538:SF41">
    <property type="entry name" value="PHENYLALANINE--TRNA LIGASE, MITOCHONDRIAL"/>
    <property type="match status" value="1"/>
</dbReference>
<dbReference type="PANTHER" id="PTHR11538">
    <property type="entry name" value="PHENYLALANYL-TRNA SYNTHETASE"/>
    <property type="match status" value="1"/>
</dbReference>
<dbReference type="Pfam" id="PF02912">
    <property type="entry name" value="Phe_tRNA-synt_N"/>
    <property type="match status" value="1"/>
</dbReference>
<dbReference type="Pfam" id="PF01409">
    <property type="entry name" value="tRNA-synt_2d"/>
    <property type="match status" value="1"/>
</dbReference>
<dbReference type="SUPFAM" id="SSF55681">
    <property type="entry name" value="Class II aaRS and biotin synthetases"/>
    <property type="match status" value="1"/>
</dbReference>
<dbReference type="SUPFAM" id="SSF46589">
    <property type="entry name" value="tRNA-binding arm"/>
    <property type="match status" value="1"/>
</dbReference>
<dbReference type="PROSITE" id="PS50862">
    <property type="entry name" value="AA_TRNA_LIGASE_II"/>
    <property type="match status" value="1"/>
</dbReference>
<name>SYFA_PROM9</name>
<evidence type="ECO:0000255" key="1">
    <source>
        <dbReference type="HAMAP-Rule" id="MF_00281"/>
    </source>
</evidence>
<reference key="1">
    <citation type="journal article" date="2006" name="Science">
        <title>Genomic islands and the ecology and evolution of Prochlorococcus.</title>
        <authorList>
            <person name="Coleman M.L."/>
            <person name="Sullivan M.B."/>
            <person name="Martiny A.C."/>
            <person name="Steglich C."/>
            <person name="Barry K."/>
            <person name="Delong E.F."/>
            <person name="Chisholm S.W."/>
        </authorList>
    </citation>
    <scope>NUCLEOTIDE SEQUENCE [LARGE SCALE GENOMIC DNA]</scope>
    <source>
        <strain>MIT 9312</strain>
    </source>
</reference>
<feature type="chain" id="PRO_0000232009" description="Phenylalanine--tRNA ligase alpha subunit">
    <location>
        <begin position="1"/>
        <end position="345"/>
    </location>
</feature>
<feature type="binding site" evidence="1">
    <location>
        <position position="272"/>
    </location>
    <ligand>
        <name>Mg(2+)</name>
        <dbReference type="ChEBI" id="CHEBI:18420"/>
        <note>shared with beta subunit</note>
    </ligand>
</feature>
<organism>
    <name type="scientific">Prochlorococcus marinus (strain MIT 9312)</name>
    <dbReference type="NCBI Taxonomy" id="74546"/>
    <lineage>
        <taxon>Bacteria</taxon>
        <taxon>Bacillati</taxon>
        <taxon>Cyanobacteriota</taxon>
        <taxon>Cyanophyceae</taxon>
        <taxon>Synechococcales</taxon>
        <taxon>Prochlorococcaceae</taxon>
        <taxon>Prochlorococcus</taxon>
    </lineage>
</organism>
<keyword id="KW-0030">Aminoacyl-tRNA synthetase</keyword>
<keyword id="KW-0067">ATP-binding</keyword>
<keyword id="KW-0963">Cytoplasm</keyword>
<keyword id="KW-0436">Ligase</keyword>
<keyword id="KW-0460">Magnesium</keyword>
<keyword id="KW-0479">Metal-binding</keyword>
<keyword id="KW-0547">Nucleotide-binding</keyword>
<keyword id="KW-0648">Protein biosynthesis</keyword>
<protein>
    <recommendedName>
        <fullName evidence="1">Phenylalanine--tRNA ligase alpha subunit</fullName>
        <ecNumber evidence="1">6.1.1.20</ecNumber>
    </recommendedName>
    <alternativeName>
        <fullName evidence="1">Phenylalanyl-tRNA synthetase alpha subunit</fullName>
        <shortName evidence="1">PheRS</shortName>
    </alternativeName>
</protein>